<protein>
    <recommendedName>
        <fullName evidence="1">3-isopropylmalate dehydratase small subunit</fullName>
        <ecNumber evidence="1">4.2.1.33</ecNumber>
    </recommendedName>
    <alternativeName>
        <fullName evidence="1">Alpha-IPM isomerase</fullName>
        <shortName evidence="1">IPMI</shortName>
    </alternativeName>
    <alternativeName>
        <fullName evidence="1">Isopropylmalate isomerase</fullName>
    </alternativeName>
</protein>
<comment type="function">
    <text evidence="1">Catalyzes the isomerization between 2-isopropylmalate and 3-isopropylmalate, via the formation of 2-isopropylmaleate.</text>
</comment>
<comment type="catalytic activity">
    <reaction evidence="1">
        <text>(2R,3S)-3-isopropylmalate = (2S)-2-isopropylmalate</text>
        <dbReference type="Rhea" id="RHEA:32287"/>
        <dbReference type="ChEBI" id="CHEBI:1178"/>
        <dbReference type="ChEBI" id="CHEBI:35121"/>
        <dbReference type="EC" id="4.2.1.33"/>
    </reaction>
</comment>
<comment type="pathway">
    <text evidence="1">Amino-acid biosynthesis; L-leucine biosynthesis; L-leucine from 3-methyl-2-oxobutanoate: step 2/4.</text>
</comment>
<comment type="subunit">
    <text evidence="1">Heterodimer of LeuC and LeuD.</text>
</comment>
<comment type="similarity">
    <text evidence="1">Belongs to the LeuD family. LeuD type 1 subfamily.</text>
</comment>
<sequence length="202" mass="22152">MKAFTRLDGRAAPLELANIDTDQIIPKQFLKTVEREGLAKGLFYDFRFDADGNEISDFVLNKPEYKSASVLIAGDNFGCGSSREHAPWALMDFGIMCVISTSFADIFNNNCFNNGLLPVVVSPEDLALLMDEAKGGNHMVSVDLEAQTVISPSGKTIGFDIDPVRKEKMLKGLDAIGETMMHGGDIDLFESKRAISQPWLEA</sequence>
<name>LEUD_CAUVC</name>
<accession>Q9ABN1</accession>
<feature type="chain" id="PRO_0000141809" description="3-isopropylmalate dehydratase small subunit">
    <location>
        <begin position="1"/>
        <end position="202"/>
    </location>
</feature>
<keyword id="KW-0028">Amino-acid biosynthesis</keyword>
<keyword id="KW-0100">Branched-chain amino acid biosynthesis</keyword>
<keyword id="KW-0432">Leucine biosynthesis</keyword>
<keyword id="KW-0456">Lyase</keyword>
<keyword id="KW-1185">Reference proteome</keyword>
<proteinExistence type="inferred from homology"/>
<evidence type="ECO:0000255" key="1">
    <source>
        <dbReference type="HAMAP-Rule" id="MF_01031"/>
    </source>
</evidence>
<organism>
    <name type="scientific">Caulobacter vibrioides (strain ATCC 19089 / CIP 103742 / CB 15)</name>
    <name type="common">Caulobacter crescentus</name>
    <dbReference type="NCBI Taxonomy" id="190650"/>
    <lineage>
        <taxon>Bacteria</taxon>
        <taxon>Pseudomonadati</taxon>
        <taxon>Pseudomonadota</taxon>
        <taxon>Alphaproteobacteria</taxon>
        <taxon>Caulobacterales</taxon>
        <taxon>Caulobacteraceae</taxon>
        <taxon>Caulobacter</taxon>
    </lineage>
</organism>
<gene>
    <name evidence="1" type="primary">leuD</name>
    <name type="ordered locus">CC_0195</name>
</gene>
<reference key="1">
    <citation type="journal article" date="2001" name="Proc. Natl. Acad. Sci. U.S.A.">
        <title>Complete genome sequence of Caulobacter crescentus.</title>
        <authorList>
            <person name="Nierman W.C."/>
            <person name="Feldblyum T.V."/>
            <person name="Laub M.T."/>
            <person name="Paulsen I.T."/>
            <person name="Nelson K.E."/>
            <person name="Eisen J.A."/>
            <person name="Heidelberg J.F."/>
            <person name="Alley M.R.K."/>
            <person name="Ohta N."/>
            <person name="Maddock J.R."/>
            <person name="Potocka I."/>
            <person name="Nelson W.C."/>
            <person name="Newton A."/>
            <person name="Stephens C."/>
            <person name="Phadke N.D."/>
            <person name="Ely B."/>
            <person name="DeBoy R.T."/>
            <person name="Dodson R.J."/>
            <person name="Durkin A.S."/>
            <person name="Gwinn M.L."/>
            <person name="Haft D.H."/>
            <person name="Kolonay J.F."/>
            <person name="Smit J."/>
            <person name="Craven M.B."/>
            <person name="Khouri H.M."/>
            <person name="Shetty J."/>
            <person name="Berry K.J."/>
            <person name="Utterback T.R."/>
            <person name="Tran K."/>
            <person name="Wolf A.M."/>
            <person name="Vamathevan J.J."/>
            <person name="Ermolaeva M.D."/>
            <person name="White O."/>
            <person name="Salzberg S.L."/>
            <person name="Venter J.C."/>
            <person name="Shapiro L."/>
            <person name="Fraser C.M."/>
        </authorList>
    </citation>
    <scope>NUCLEOTIDE SEQUENCE [LARGE SCALE GENOMIC DNA]</scope>
    <source>
        <strain>ATCC 19089 / CIP 103742 / CB 15</strain>
    </source>
</reference>
<dbReference type="EC" id="4.2.1.33" evidence="1"/>
<dbReference type="EMBL" id="AE005673">
    <property type="protein sequence ID" value="AAK22182.1"/>
    <property type="molecule type" value="Genomic_DNA"/>
</dbReference>
<dbReference type="PIR" id="B87273">
    <property type="entry name" value="B87273"/>
</dbReference>
<dbReference type="RefSeq" id="NP_419014.1">
    <property type="nucleotide sequence ID" value="NC_002696.2"/>
</dbReference>
<dbReference type="RefSeq" id="WP_010918084.1">
    <property type="nucleotide sequence ID" value="NC_002696.2"/>
</dbReference>
<dbReference type="SMR" id="Q9ABN1"/>
<dbReference type="STRING" id="190650.CC_0195"/>
<dbReference type="EnsemblBacteria" id="AAK22182">
    <property type="protein sequence ID" value="AAK22182"/>
    <property type="gene ID" value="CC_0195"/>
</dbReference>
<dbReference type="KEGG" id="ccr:CC_0195"/>
<dbReference type="PATRIC" id="fig|190650.5.peg.192"/>
<dbReference type="eggNOG" id="COG0066">
    <property type="taxonomic scope" value="Bacteria"/>
</dbReference>
<dbReference type="HOGENOM" id="CLU_081378_0_3_5"/>
<dbReference type="BioCyc" id="CAULO:CC0195-MONOMER"/>
<dbReference type="UniPathway" id="UPA00048">
    <property type="reaction ID" value="UER00071"/>
</dbReference>
<dbReference type="Proteomes" id="UP000001816">
    <property type="component" value="Chromosome"/>
</dbReference>
<dbReference type="GO" id="GO:0009316">
    <property type="term" value="C:3-isopropylmalate dehydratase complex"/>
    <property type="evidence" value="ECO:0007669"/>
    <property type="project" value="InterPro"/>
</dbReference>
<dbReference type="GO" id="GO:0003861">
    <property type="term" value="F:3-isopropylmalate dehydratase activity"/>
    <property type="evidence" value="ECO:0007669"/>
    <property type="project" value="UniProtKB-UniRule"/>
</dbReference>
<dbReference type="GO" id="GO:0009098">
    <property type="term" value="P:L-leucine biosynthetic process"/>
    <property type="evidence" value="ECO:0007669"/>
    <property type="project" value="UniProtKB-UniRule"/>
</dbReference>
<dbReference type="CDD" id="cd01577">
    <property type="entry name" value="IPMI_Swivel"/>
    <property type="match status" value="1"/>
</dbReference>
<dbReference type="FunFam" id="3.20.19.10:FF:000003">
    <property type="entry name" value="3-isopropylmalate dehydratase small subunit"/>
    <property type="match status" value="1"/>
</dbReference>
<dbReference type="Gene3D" id="3.20.19.10">
    <property type="entry name" value="Aconitase, domain 4"/>
    <property type="match status" value="1"/>
</dbReference>
<dbReference type="HAMAP" id="MF_01031">
    <property type="entry name" value="LeuD_type1"/>
    <property type="match status" value="1"/>
</dbReference>
<dbReference type="InterPro" id="IPR004431">
    <property type="entry name" value="3-IsopropMal_deHydase_ssu"/>
</dbReference>
<dbReference type="InterPro" id="IPR015928">
    <property type="entry name" value="Aconitase/3IPM_dehydase_swvl"/>
</dbReference>
<dbReference type="InterPro" id="IPR000573">
    <property type="entry name" value="AconitaseA/IPMdHydase_ssu_swvl"/>
</dbReference>
<dbReference type="InterPro" id="IPR033940">
    <property type="entry name" value="IPMI_Swivel"/>
</dbReference>
<dbReference type="InterPro" id="IPR050075">
    <property type="entry name" value="LeuD"/>
</dbReference>
<dbReference type="NCBIfam" id="TIGR00171">
    <property type="entry name" value="leuD"/>
    <property type="match status" value="1"/>
</dbReference>
<dbReference type="NCBIfam" id="NF002458">
    <property type="entry name" value="PRK01641.1"/>
    <property type="match status" value="1"/>
</dbReference>
<dbReference type="PANTHER" id="PTHR43345:SF5">
    <property type="entry name" value="3-ISOPROPYLMALATE DEHYDRATASE SMALL SUBUNIT"/>
    <property type="match status" value="1"/>
</dbReference>
<dbReference type="PANTHER" id="PTHR43345">
    <property type="entry name" value="3-ISOPROPYLMALATE DEHYDRATASE SMALL SUBUNIT 2-RELATED-RELATED"/>
    <property type="match status" value="1"/>
</dbReference>
<dbReference type="Pfam" id="PF00694">
    <property type="entry name" value="Aconitase_C"/>
    <property type="match status" value="1"/>
</dbReference>
<dbReference type="SUPFAM" id="SSF52016">
    <property type="entry name" value="LeuD/IlvD-like"/>
    <property type="match status" value="1"/>
</dbReference>